<name>LEPA_LEVBA</name>
<sequence>MDLEKLKNHQKYIRNFSIVAHIDHGKSTLADRILELTDTISKRDMQDQVLDDMDLERERGITIKLNAVELTYHAKDGHDYEFHLIDTPGHVDFSYEVSRSLAACEGAVLVVDAAQGVEAQTLANVYLALDDDLEIVPVINKIDLPAADPDKVKNEIEEVIGLDASDAVLASAKQGIGIPELLEQIVTKIPAPAGDLAAPLKALVFDSVYDDYRGVVLSIRLFEGTVKPGDKIRLMNSGSEYEVTEVGVNSPKPIARDYLIAGDVGYITASIKDITDTRVGDTVTSADQPADKALPGYREMSPMVYAGLYPTDNAKLNDLREALEKLQLNDAALEFEPESSQALGFGFRCGFLGMLHMDVIQERLEREFNLDLITTAPSVTYHAYLTDGTMKEVENPAEMPEASAIKRIEEPIVKATIMAPNDYVGAVMDLCQHRRGQFLTMEYLDDYRVNIIYNMPLSEIIFDFFDKLKSNTRGYASLDYEMNGYQGADLVKIDILLNGDKVDALSFIAHRTFAPARGREIASRLKKIIPRQNFEIPVQAAIGAKIIARTTIKAYRKDVTAHLYGGDRTRRMKLLEKQKAGKKRMKAVGKVDIPQEAFMAVLQTDEDETK</sequence>
<dbReference type="EC" id="3.6.5.n1" evidence="1"/>
<dbReference type="EMBL" id="CP000416">
    <property type="protein sequence ID" value="ABJ64424.1"/>
    <property type="molecule type" value="Genomic_DNA"/>
</dbReference>
<dbReference type="RefSeq" id="WP_011667997.1">
    <property type="nucleotide sequence ID" value="NC_008497.1"/>
</dbReference>
<dbReference type="SMR" id="Q03QU8"/>
<dbReference type="STRING" id="387344.LVIS_1322"/>
<dbReference type="GeneID" id="56993092"/>
<dbReference type="KEGG" id="lbr:LVIS_1322"/>
<dbReference type="eggNOG" id="COG0481">
    <property type="taxonomic scope" value="Bacteria"/>
</dbReference>
<dbReference type="HOGENOM" id="CLU_009995_3_3_9"/>
<dbReference type="Proteomes" id="UP000001652">
    <property type="component" value="Chromosome"/>
</dbReference>
<dbReference type="GO" id="GO:0005886">
    <property type="term" value="C:plasma membrane"/>
    <property type="evidence" value="ECO:0007669"/>
    <property type="project" value="UniProtKB-SubCell"/>
</dbReference>
<dbReference type="GO" id="GO:0005525">
    <property type="term" value="F:GTP binding"/>
    <property type="evidence" value="ECO:0007669"/>
    <property type="project" value="UniProtKB-UniRule"/>
</dbReference>
<dbReference type="GO" id="GO:0003924">
    <property type="term" value="F:GTPase activity"/>
    <property type="evidence" value="ECO:0007669"/>
    <property type="project" value="UniProtKB-UniRule"/>
</dbReference>
<dbReference type="GO" id="GO:0043022">
    <property type="term" value="F:ribosome binding"/>
    <property type="evidence" value="ECO:0007669"/>
    <property type="project" value="UniProtKB-UniRule"/>
</dbReference>
<dbReference type="GO" id="GO:0003746">
    <property type="term" value="F:translation elongation factor activity"/>
    <property type="evidence" value="ECO:0007669"/>
    <property type="project" value="UniProtKB-UniRule"/>
</dbReference>
<dbReference type="GO" id="GO:0045727">
    <property type="term" value="P:positive regulation of translation"/>
    <property type="evidence" value="ECO:0007669"/>
    <property type="project" value="UniProtKB-UniRule"/>
</dbReference>
<dbReference type="CDD" id="cd03699">
    <property type="entry name" value="EF4_II"/>
    <property type="match status" value="1"/>
</dbReference>
<dbReference type="CDD" id="cd16260">
    <property type="entry name" value="EF4_III"/>
    <property type="match status" value="1"/>
</dbReference>
<dbReference type="CDD" id="cd01890">
    <property type="entry name" value="LepA"/>
    <property type="match status" value="1"/>
</dbReference>
<dbReference type="CDD" id="cd03709">
    <property type="entry name" value="lepA_C"/>
    <property type="match status" value="1"/>
</dbReference>
<dbReference type="FunFam" id="3.40.50.300:FF:000078">
    <property type="entry name" value="Elongation factor 4"/>
    <property type="match status" value="1"/>
</dbReference>
<dbReference type="FunFam" id="2.40.30.10:FF:000015">
    <property type="entry name" value="Translation factor GUF1, mitochondrial"/>
    <property type="match status" value="1"/>
</dbReference>
<dbReference type="FunFam" id="3.30.70.240:FF:000007">
    <property type="entry name" value="Translation factor GUF1, mitochondrial"/>
    <property type="match status" value="1"/>
</dbReference>
<dbReference type="FunFam" id="3.30.70.2570:FF:000001">
    <property type="entry name" value="Translation factor GUF1, mitochondrial"/>
    <property type="match status" value="1"/>
</dbReference>
<dbReference type="FunFam" id="3.30.70.870:FF:000004">
    <property type="entry name" value="Translation factor GUF1, mitochondrial"/>
    <property type="match status" value="1"/>
</dbReference>
<dbReference type="Gene3D" id="3.30.70.240">
    <property type="match status" value="1"/>
</dbReference>
<dbReference type="Gene3D" id="3.30.70.2570">
    <property type="entry name" value="Elongation factor 4, C-terminal domain"/>
    <property type="match status" value="1"/>
</dbReference>
<dbReference type="Gene3D" id="3.30.70.870">
    <property type="entry name" value="Elongation Factor G (Translational Gtpase), domain 3"/>
    <property type="match status" value="1"/>
</dbReference>
<dbReference type="Gene3D" id="3.40.50.300">
    <property type="entry name" value="P-loop containing nucleotide triphosphate hydrolases"/>
    <property type="match status" value="1"/>
</dbReference>
<dbReference type="Gene3D" id="2.40.30.10">
    <property type="entry name" value="Translation factors"/>
    <property type="match status" value="1"/>
</dbReference>
<dbReference type="HAMAP" id="MF_00071">
    <property type="entry name" value="LepA"/>
    <property type="match status" value="1"/>
</dbReference>
<dbReference type="InterPro" id="IPR006297">
    <property type="entry name" value="EF-4"/>
</dbReference>
<dbReference type="InterPro" id="IPR035647">
    <property type="entry name" value="EFG_III/V"/>
</dbReference>
<dbReference type="InterPro" id="IPR000640">
    <property type="entry name" value="EFG_V-like"/>
</dbReference>
<dbReference type="InterPro" id="IPR004161">
    <property type="entry name" value="EFTu-like_2"/>
</dbReference>
<dbReference type="InterPro" id="IPR038363">
    <property type="entry name" value="LepA_C_sf"/>
</dbReference>
<dbReference type="InterPro" id="IPR013842">
    <property type="entry name" value="LepA_CTD"/>
</dbReference>
<dbReference type="InterPro" id="IPR035654">
    <property type="entry name" value="LepA_IV"/>
</dbReference>
<dbReference type="InterPro" id="IPR027417">
    <property type="entry name" value="P-loop_NTPase"/>
</dbReference>
<dbReference type="InterPro" id="IPR005225">
    <property type="entry name" value="Small_GTP-bd"/>
</dbReference>
<dbReference type="InterPro" id="IPR000795">
    <property type="entry name" value="T_Tr_GTP-bd_dom"/>
</dbReference>
<dbReference type="InterPro" id="IPR009000">
    <property type="entry name" value="Transl_B-barrel_sf"/>
</dbReference>
<dbReference type="NCBIfam" id="TIGR01393">
    <property type="entry name" value="lepA"/>
    <property type="match status" value="1"/>
</dbReference>
<dbReference type="NCBIfam" id="TIGR00231">
    <property type="entry name" value="small_GTP"/>
    <property type="match status" value="1"/>
</dbReference>
<dbReference type="PANTHER" id="PTHR43512:SF4">
    <property type="entry name" value="TRANSLATION FACTOR GUF1 HOMOLOG, CHLOROPLASTIC"/>
    <property type="match status" value="1"/>
</dbReference>
<dbReference type="PANTHER" id="PTHR43512">
    <property type="entry name" value="TRANSLATION FACTOR GUF1-RELATED"/>
    <property type="match status" value="1"/>
</dbReference>
<dbReference type="Pfam" id="PF00679">
    <property type="entry name" value="EFG_C"/>
    <property type="match status" value="1"/>
</dbReference>
<dbReference type="Pfam" id="PF00009">
    <property type="entry name" value="GTP_EFTU"/>
    <property type="match status" value="1"/>
</dbReference>
<dbReference type="Pfam" id="PF03144">
    <property type="entry name" value="GTP_EFTU_D2"/>
    <property type="match status" value="1"/>
</dbReference>
<dbReference type="Pfam" id="PF06421">
    <property type="entry name" value="LepA_C"/>
    <property type="match status" value="1"/>
</dbReference>
<dbReference type="PRINTS" id="PR00315">
    <property type="entry name" value="ELONGATNFCT"/>
</dbReference>
<dbReference type="SMART" id="SM00838">
    <property type="entry name" value="EFG_C"/>
    <property type="match status" value="1"/>
</dbReference>
<dbReference type="SUPFAM" id="SSF54980">
    <property type="entry name" value="EF-G C-terminal domain-like"/>
    <property type="match status" value="2"/>
</dbReference>
<dbReference type="SUPFAM" id="SSF52540">
    <property type="entry name" value="P-loop containing nucleoside triphosphate hydrolases"/>
    <property type="match status" value="1"/>
</dbReference>
<dbReference type="SUPFAM" id="SSF50447">
    <property type="entry name" value="Translation proteins"/>
    <property type="match status" value="1"/>
</dbReference>
<dbReference type="PROSITE" id="PS51722">
    <property type="entry name" value="G_TR_2"/>
    <property type="match status" value="1"/>
</dbReference>
<accession>Q03QU8</accession>
<proteinExistence type="inferred from homology"/>
<evidence type="ECO:0000255" key="1">
    <source>
        <dbReference type="HAMAP-Rule" id="MF_00071"/>
    </source>
</evidence>
<feature type="chain" id="PRO_1000032008" description="Elongation factor 4">
    <location>
        <begin position="1"/>
        <end position="610"/>
    </location>
</feature>
<feature type="domain" description="tr-type G">
    <location>
        <begin position="11"/>
        <end position="193"/>
    </location>
</feature>
<feature type="binding site" evidence="1">
    <location>
        <begin position="23"/>
        <end position="28"/>
    </location>
    <ligand>
        <name>GTP</name>
        <dbReference type="ChEBI" id="CHEBI:37565"/>
    </ligand>
</feature>
<feature type="binding site" evidence="1">
    <location>
        <begin position="140"/>
        <end position="143"/>
    </location>
    <ligand>
        <name>GTP</name>
        <dbReference type="ChEBI" id="CHEBI:37565"/>
    </ligand>
</feature>
<gene>
    <name evidence="1" type="primary">lepA</name>
    <name type="ordered locus">LVIS_1322</name>
</gene>
<comment type="function">
    <text evidence="1">Required for accurate and efficient protein synthesis under certain stress conditions. May act as a fidelity factor of the translation reaction, by catalyzing a one-codon backward translocation of tRNAs on improperly translocated ribosomes. Back-translocation proceeds from a post-translocation (POST) complex to a pre-translocation (PRE) complex, thus giving elongation factor G a second chance to translocate the tRNAs correctly. Binds to ribosomes in a GTP-dependent manner.</text>
</comment>
<comment type="catalytic activity">
    <reaction evidence="1">
        <text>GTP + H2O = GDP + phosphate + H(+)</text>
        <dbReference type="Rhea" id="RHEA:19669"/>
        <dbReference type="ChEBI" id="CHEBI:15377"/>
        <dbReference type="ChEBI" id="CHEBI:15378"/>
        <dbReference type="ChEBI" id="CHEBI:37565"/>
        <dbReference type="ChEBI" id="CHEBI:43474"/>
        <dbReference type="ChEBI" id="CHEBI:58189"/>
        <dbReference type="EC" id="3.6.5.n1"/>
    </reaction>
</comment>
<comment type="subcellular location">
    <subcellularLocation>
        <location evidence="1">Cell membrane</location>
        <topology evidence="1">Peripheral membrane protein</topology>
        <orientation evidence="1">Cytoplasmic side</orientation>
    </subcellularLocation>
</comment>
<comment type="similarity">
    <text evidence="1">Belongs to the TRAFAC class translation factor GTPase superfamily. Classic translation factor GTPase family. LepA subfamily.</text>
</comment>
<reference key="1">
    <citation type="journal article" date="2006" name="Proc. Natl. Acad. Sci. U.S.A.">
        <title>Comparative genomics of the lactic acid bacteria.</title>
        <authorList>
            <person name="Makarova K.S."/>
            <person name="Slesarev A."/>
            <person name="Wolf Y.I."/>
            <person name="Sorokin A."/>
            <person name="Mirkin B."/>
            <person name="Koonin E.V."/>
            <person name="Pavlov A."/>
            <person name="Pavlova N."/>
            <person name="Karamychev V."/>
            <person name="Polouchine N."/>
            <person name="Shakhova V."/>
            <person name="Grigoriev I."/>
            <person name="Lou Y."/>
            <person name="Rohksar D."/>
            <person name="Lucas S."/>
            <person name="Huang K."/>
            <person name="Goodstein D.M."/>
            <person name="Hawkins T."/>
            <person name="Plengvidhya V."/>
            <person name="Welker D."/>
            <person name="Hughes J."/>
            <person name="Goh Y."/>
            <person name="Benson A."/>
            <person name="Baldwin K."/>
            <person name="Lee J.-H."/>
            <person name="Diaz-Muniz I."/>
            <person name="Dosti B."/>
            <person name="Smeianov V."/>
            <person name="Wechter W."/>
            <person name="Barabote R."/>
            <person name="Lorca G."/>
            <person name="Altermann E."/>
            <person name="Barrangou R."/>
            <person name="Ganesan B."/>
            <person name="Xie Y."/>
            <person name="Rawsthorne H."/>
            <person name="Tamir D."/>
            <person name="Parker C."/>
            <person name="Breidt F."/>
            <person name="Broadbent J.R."/>
            <person name="Hutkins R."/>
            <person name="O'Sullivan D."/>
            <person name="Steele J."/>
            <person name="Unlu G."/>
            <person name="Saier M.H. Jr."/>
            <person name="Klaenhammer T."/>
            <person name="Richardson P."/>
            <person name="Kozyavkin S."/>
            <person name="Weimer B.C."/>
            <person name="Mills D.A."/>
        </authorList>
    </citation>
    <scope>NUCLEOTIDE SEQUENCE [LARGE SCALE GENOMIC DNA]</scope>
    <source>
        <strain>ATCC 367 / BCRC 12310 / CIP 105137 / JCM 1170 / LMG 11437 / NCIMB 947 / NCTC 947</strain>
    </source>
</reference>
<organism>
    <name type="scientific">Levilactobacillus brevis (strain ATCC 367 / BCRC 12310 / CIP 105137 / JCM 1170 / LMG 11437 / NCIMB 947 / NCTC 947)</name>
    <name type="common">Lactobacillus brevis</name>
    <dbReference type="NCBI Taxonomy" id="387344"/>
    <lineage>
        <taxon>Bacteria</taxon>
        <taxon>Bacillati</taxon>
        <taxon>Bacillota</taxon>
        <taxon>Bacilli</taxon>
        <taxon>Lactobacillales</taxon>
        <taxon>Lactobacillaceae</taxon>
        <taxon>Levilactobacillus</taxon>
    </lineage>
</organism>
<keyword id="KW-1003">Cell membrane</keyword>
<keyword id="KW-0342">GTP-binding</keyword>
<keyword id="KW-0378">Hydrolase</keyword>
<keyword id="KW-0472">Membrane</keyword>
<keyword id="KW-0547">Nucleotide-binding</keyword>
<keyword id="KW-0648">Protein biosynthesis</keyword>
<keyword id="KW-1185">Reference proteome</keyword>
<protein>
    <recommendedName>
        <fullName evidence="1">Elongation factor 4</fullName>
        <shortName evidence="1">EF-4</shortName>
        <ecNumber evidence="1">3.6.5.n1</ecNumber>
    </recommendedName>
    <alternativeName>
        <fullName evidence="1">Ribosomal back-translocase LepA</fullName>
    </alternativeName>
</protein>